<sequence length="144" mass="15207">MRLNTLSPAEGAKHAPKRVGRGIGSGLGKTAGRGHKGQNSRSGGGVRRGFEGGQMPLYRRLPKFGFTSRKAMITAEVRLSELALVEGDVIDLNTLKAANVVGIQMEFVKVILSGEVNRAVTLRGLRVTKGARAAIEAAGGKIEE</sequence>
<accession>A9R913</accession>
<name>RL15_YERPG</name>
<feature type="chain" id="PRO_1000142904" description="Large ribosomal subunit protein uL15">
    <location>
        <begin position="1"/>
        <end position="144"/>
    </location>
</feature>
<feature type="region of interest" description="Disordered" evidence="2">
    <location>
        <begin position="1"/>
        <end position="52"/>
    </location>
</feature>
<feature type="compositionally biased region" description="Gly residues" evidence="2">
    <location>
        <begin position="21"/>
        <end position="31"/>
    </location>
</feature>
<comment type="function">
    <text evidence="1">Binds to the 23S rRNA.</text>
</comment>
<comment type="subunit">
    <text evidence="1">Part of the 50S ribosomal subunit.</text>
</comment>
<comment type="similarity">
    <text evidence="1">Belongs to the universal ribosomal protein uL15 family.</text>
</comment>
<organism>
    <name type="scientific">Yersinia pestis bv. Antiqua (strain Angola)</name>
    <dbReference type="NCBI Taxonomy" id="349746"/>
    <lineage>
        <taxon>Bacteria</taxon>
        <taxon>Pseudomonadati</taxon>
        <taxon>Pseudomonadota</taxon>
        <taxon>Gammaproteobacteria</taxon>
        <taxon>Enterobacterales</taxon>
        <taxon>Yersiniaceae</taxon>
        <taxon>Yersinia</taxon>
    </lineage>
</organism>
<gene>
    <name evidence="1" type="primary">rplO</name>
    <name type="ordered locus">YpAngola_A0601</name>
</gene>
<reference key="1">
    <citation type="journal article" date="2010" name="J. Bacteriol.">
        <title>Genome sequence of the deep-rooted Yersinia pestis strain Angola reveals new insights into the evolution and pangenome of the plague bacterium.</title>
        <authorList>
            <person name="Eppinger M."/>
            <person name="Worsham P.L."/>
            <person name="Nikolich M.P."/>
            <person name="Riley D.R."/>
            <person name="Sebastian Y."/>
            <person name="Mou S."/>
            <person name="Achtman M."/>
            <person name="Lindler L.E."/>
            <person name="Ravel J."/>
        </authorList>
    </citation>
    <scope>NUCLEOTIDE SEQUENCE [LARGE SCALE GENOMIC DNA]</scope>
    <source>
        <strain>Angola</strain>
    </source>
</reference>
<proteinExistence type="inferred from homology"/>
<protein>
    <recommendedName>
        <fullName evidence="1">Large ribosomal subunit protein uL15</fullName>
    </recommendedName>
    <alternativeName>
        <fullName evidence="3">50S ribosomal protein L15</fullName>
    </alternativeName>
</protein>
<evidence type="ECO:0000255" key="1">
    <source>
        <dbReference type="HAMAP-Rule" id="MF_01341"/>
    </source>
</evidence>
<evidence type="ECO:0000256" key="2">
    <source>
        <dbReference type="SAM" id="MobiDB-lite"/>
    </source>
</evidence>
<evidence type="ECO:0000305" key="3"/>
<keyword id="KW-0687">Ribonucleoprotein</keyword>
<keyword id="KW-0689">Ribosomal protein</keyword>
<keyword id="KW-0694">RNA-binding</keyword>
<keyword id="KW-0699">rRNA-binding</keyword>
<dbReference type="EMBL" id="CP000901">
    <property type="protein sequence ID" value="ABX87094.1"/>
    <property type="molecule type" value="Genomic_DNA"/>
</dbReference>
<dbReference type="RefSeq" id="WP_002213341.1">
    <property type="nucleotide sequence ID" value="NZ_CP009935.1"/>
</dbReference>
<dbReference type="SMR" id="A9R913"/>
<dbReference type="GeneID" id="96663177"/>
<dbReference type="KEGG" id="ypg:YpAngola_A0601"/>
<dbReference type="PATRIC" id="fig|349746.12.peg.1552"/>
<dbReference type="GO" id="GO:0022625">
    <property type="term" value="C:cytosolic large ribosomal subunit"/>
    <property type="evidence" value="ECO:0007669"/>
    <property type="project" value="TreeGrafter"/>
</dbReference>
<dbReference type="GO" id="GO:0019843">
    <property type="term" value="F:rRNA binding"/>
    <property type="evidence" value="ECO:0007669"/>
    <property type="project" value="UniProtKB-UniRule"/>
</dbReference>
<dbReference type="GO" id="GO:0003735">
    <property type="term" value="F:structural constituent of ribosome"/>
    <property type="evidence" value="ECO:0007669"/>
    <property type="project" value="InterPro"/>
</dbReference>
<dbReference type="GO" id="GO:0006412">
    <property type="term" value="P:translation"/>
    <property type="evidence" value="ECO:0007669"/>
    <property type="project" value="UniProtKB-UniRule"/>
</dbReference>
<dbReference type="FunFam" id="3.100.10.10:FF:000003">
    <property type="entry name" value="50S ribosomal protein L15"/>
    <property type="match status" value="1"/>
</dbReference>
<dbReference type="Gene3D" id="3.100.10.10">
    <property type="match status" value="1"/>
</dbReference>
<dbReference type="HAMAP" id="MF_01341">
    <property type="entry name" value="Ribosomal_uL15"/>
    <property type="match status" value="1"/>
</dbReference>
<dbReference type="InterPro" id="IPR030878">
    <property type="entry name" value="Ribosomal_uL15"/>
</dbReference>
<dbReference type="InterPro" id="IPR021131">
    <property type="entry name" value="Ribosomal_uL15/eL18"/>
</dbReference>
<dbReference type="InterPro" id="IPR036227">
    <property type="entry name" value="Ribosomal_uL15/eL18_sf"/>
</dbReference>
<dbReference type="InterPro" id="IPR005749">
    <property type="entry name" value="Ribosomal_uL15_bac-type"/>
</dbReference>
<dbReference type="InterPro" id="IPR001196">
    <property type="entry name" value="Ribosomal_uL15_CS"/>
</dbReference>
<dbReference type="NCBIfam" id="TIGR01071">
    <property type="entry name" value="rplO_bact"/>
    <property type="match status" value="1"/>
</dbReference>
<dbReference type="PANTHER" id="PTHR12934">
    <property type="entry name" value="50S RIBOSOMAL PROTEIN L15"/>
    <property type="match status" value="1"/>
</dbReference>
<dbReference type="PANTHER" id="PTHR12934:SF11">
    <property type="entry name" value="LARGE RIBOSOMAL SUBUNIT PROTEIN UL15M"/>
    <property type="match status" value="1"/>
</dbReference>
<dbReference type="Pfam" id="PF00828">
    <property type="entry name" value="Ribosomal_L27A"/>
    <property type="match status" value="1"/>
</dbReference>
<dbReference type="SUPFAM" id="SSF52080">
    <property type="entry name" value="Ribosomal proteins L15p and L18e"/>
    <property type="match status" value="1"/>
</dbReference>
<dbReference type="PROSITE" id="PS00475">
    <property type="entry name" value="RIBOSOMAL_L15"/>
    <property type="match status" value="1"/>
</dbReference>